<feature type="chain" id="PRO_1000196293" description="Small ribosomal subunit protein uS10">
    <location>
        <begin position="1"/>
        <end position="103"/>
    </location>
</feature>
<keyword id="KW-0687">Ribonucleoprotein</keyword>
<keyword id="KW-0689">Ribosomal protein</keyword>
<gene>
    <name evidence="1" type="primary">rpsJ</name>
    <name type="ordered locus">BUAP5A_518</name>
</gene>
<protein>
    <recommendedName>
        <fullName evidence="1">Small ribosomal subunit protein uS10</fullName>
    </recommendedName>
    <alternativeName>
        <fullName evidence="2">30S ribosomal protein S10</fullName>
    </alternativeName>
</protein>
<comment type="function">
    <text evidence="1">Involved in the binding of tRNA to the ribosomes.</text>
</comment>
<comment type="subunit">
    <text evidence="1">Part of the 30S ribosomal subunit.</text>
</comment>
<comment type="similarity">
    <text evidence="1">Belongs to the universal ribosomal protein uS10 family.</text>
</comment>
<name>RS10_BUCA5</name>
<evidence type="ECO:0000255" key="1">
    <source>
        <dbReference type="HAMAP-Rule" id="MF_00508"/>
    </source>
</evidence>
<evidence type="ECO:0000305" key="2"/>
<sequence length="103" mass="11811">MQNQRIRIRLKAFDHRLIDQSTTEIVETAKRTGAQVRGPIPLPTRKERFTILVSPHVNKDARDQYEIRTHKRLIDIVEPTEKTVDALMRLDLAAGVDVQISLG</sequence>
<proteinExistence type="inferred from homology"/>
<accession>B8D9U8</accession>
<organism>
    <name type="scientific">Buchnera aphidicola subsp. Acyrthosiphon pisum (strain 5A)</name>
    <dbReference type="NCBI Taxonomy" id="563178"/>
    <lineage>
        <taxon>Bacteria</taxon>
        <taxon>Pseudomonadati</taxon>
        <taxon>Pseudomonadota</taxon>
        <taxon>Gammaproteobacteria</taxon>
        <taxon>Enterobacterales</taxon>
        <taxon>Erwiniaceae</taxon>
        <taxon>Buchnera</taxon>
    </lineage>
</organism>
<dbReference type="EMBL" id="CP001161">
    <property type="protein sequence ID" value="ACL30869.1"/>
    <property type="molecule type" value="Genomic_DNA"/>
</dbReference>
<dbReference type="RefSeq" id="WP_009874476.1">
    <property type="nucleotide sequence ID" value="NC_011833.1"/>
</dbReference>
<dbReference type="SMR" id="B8D9U8"/>
<dbReference type="KEGG" id="bap:BUAP5A_518"/>
<dbReference type="HOGENOM" id="CLU_122625_1_3_6"/>
<dbReference type="OrthoDB" id="9804464at2"/>
<dbReference type="Proteomes" id="UP000006904">
    <property type="component" value="Chromosome"/>
</dbReference>
<dbReference type="GO" id="GO:1990904">
    <property type="term" value="C:ribonucleoprotein complex"/>
    <property type="evidence" value="ECO:0007669"/>
    <property type="project" value="UniProtKB-KW"/>
</dbReference>
<dbReference type="GO" id="GO:0005840">
    <property type="term" value="C:ribosome"/>
    <property type="evidence" value="ECO:0007669"/>
    <property type="project" value="UniProtKB-KW"/>
</dbReference>
<dbReference type="GO" id="GO:0003735">
    <property type="term" value="F:structural constituent of ribosome"/>
    <property type="evidence" value="ECO:0007669"/>
    <property type="project" value="InterPro"/>
</dbReference>
<dbReference type="GO" id="GO:0000049">
    <property type="term" value="F:tRNA binding"/>
    <property type="evidence" value="ECO:0007669"/>
    <property type="project" value="UniProtKB-UniRule"/>
</dbReference>
<dbReference type="GO" id="GO:0006412">
    <property type="term" value="P:translation"/>
    <property type="evidence" value="ECO:0007669"/>
    <property type="project" value="UniProtKB-UniRule"/>
</dbReference>
<dbReference type="FunFam" id="3.30.70.600:FF:000001">
    <property type="entry name" value="30S ribosomal protein S10"/>
    <property type="match status" value="1"/>
</dbReference>
<dbReference type="Gene3D" id="3.30.70.600">
    <property type="entry name" value="Ribosomal protein S10 domain"/>
    <property type="match status" value="1"/>
</dbReference>
<dbReference type="HAMAP" id="MF_00508">
    <property type="entry name" value="Ribosomal_uS10"/>
    <property type="match status" value="1"/>
</dbReference>
<dbReference type="InterPro" id="IPR001848">
    <property type="entry name" value="Ribosomal_uS10"/>
</dbReference>
<dbReference type="InterPro" id="IPR018268">
    <property type="entry name" value="Ribosomal_uS10_CS"/>
</dbReference>
<dbReference type="InterPro" id="IPR027486">
    <property type="entry name" value="Ribosomal_uS10_dom"/>
</dbReference>
<dbReference type="InterPro" id="IPR036838">
    <property type="entry name" value="Ribosomal_uS10_dom_sf"/>
</dbReference>
<dbReference type="NCBIfam" id="NF001861">
    <property type="entry name" value="PRK00596.1"/>
    <property type="match status" value="1"/>
</dbReference>
<dbReference type="NCBIfam" id="TIGR01049">
    <property type="entry name" value="rpsJ_bact"/>
    <property type="match status" value="1"/>
</dbReference>
<dbReference type="PANTHER" id="PTHR11700">
    <property type="entry name" value="30S RIBOSOMAL PROTEIN S10 FAMILY MEMBER"/>
    <property type="match status" value="1"/>
</dbReference>
<dbReference type="Pfam" id="PF00338">
    <property type="entry name" value="Ribosomal_S10"/>
    <property type="match status" value="1"/>
</dbReference>
<dbReference type="PRINTS" id="PR00971">
    <property type="entry name" value="RIBOSOMALS10"/>
</dbReference>
<dbReference type="SMART" id="SM01403">
    <property type="entry name" value="Ribosomal_S10"/>
    <property type="match status" value="1"/>
</dbReference>
<dbReference type="SUPFAM" id="SSF54999">
    <property type="entry name" value="Ribosomal protein S10"/>
    <property type="match status" value="1"/>
</dbReference>
<dbReference type="PROSITE" id="PS00361">
    <property type="entry name" value="RIBOSOMAL_S10"/>
    <property type="match status" value="1"/>
</dbReference>
<reference key="1">
    <citation type="journal article" date="2009" name="Science">
        <title>The dynamics and time scale of ongoing genomic erosion in symbiotic bacteria.</title>
        <authorList>
            <person name="Moran N.A."/>
            <person name="McLaughlin H.J."/>
            <person name="Sorek R."/>
        </authorList>
    </citation>
    <scope>NUCLEOTIDE SEQUENCE [LARGE SCALE GENOMIC DNA]</scope>
    <source>
        <strain>5A</strain>
    </source>
</reference>